<proteinExistence type="inferred from homology"/>
<reference key="1">
    <citation type="journal article" date="2002" name="DNA Res.">
        <title>Complete genomic sequence of nitrogen-fixing symbiotic bacterium Bradyrhizobium japonicum USDA110.</title>
        <authorList>
            <person name="Kaneko T."/>
            <person name="Nakamura Y."/>
            <person name="Sato S."/>
            <person name="Minamisawa K."/>
            <person name="Uchiumi T."/>
            <person name="Sasamoto S."/>
            <person name="Watanabe A."/>
            <person name="Idesawa K."/>
            <person name="Iriguchi M."/>
            <person name="Kawashima K."/>
            <person name="Kohara M."/>
            <person name="Matsumoto M."/>
            <person name="Shimpo S."/>
            <person name="Tsuruoka H."/>
            <person name="Wada T."/>
            <person name="Yamada M."/>
            <person name="Tabata S."/>
        </authorList>
    </citation>
    <scope>NUCLEOTIDE SEQUENCE [LARGE SCALE GENOMIC DNA]</scope>
    <source>
        <strain>JCM 10833 / BCRC 13528 / IAM 13628 / NBRC 14792 / USDA 110</strain>
    </source>
</reference>
<accession>Q89J86</accession>
<gene>
    <name evidence="1" type="primary">rplW</name>
    <name type="ordered locus">bll5398</name>
</gene>
<organism>
    <name type="scientific">Bradyrhizobium diazoefficiens (strain JCM 10833 / BCRC 13528 / IAM 13628 / NBRC 14792 / USDA 110)</name>
    <dbReference type="NCBI Taxonomy" id="224911"/>
    <lineage>
        <taxon>Bacteria</taxon>
        <taxon>Pseudomonadati</taxon>
        <taxon>Pseudomonadota</taxon>
        <taxon>Alphaproteobacteria</taxon>
        <taxon>Hyphomicrobiales</taxon>
        <taxon>Nitrobacteraceae</taxon>
        <taxon>Bradyrhizobium</taxon>
    </lineage>
</organism>
<name>RL23_BRADU</name>
<comment type="function">
    <text evidence="1">One of the early assembly proteins it binds 23S rRNA. One of the proteins that surrounds the polypeptide exit tunnel on the outside of the ribosome. Forms the main docking site for trigger factor binding to the ribosome.</text>
</comment>
<comment type="subunit">
    <text evidence="1">Part of the 50S ribosomal subunit. Contacts protein L29, and trigger factor when it is bound to the ribosome.</text>
</comment>
<comment type="similarity">
    <text evidence="1">Belongs to the universal ribosomal protein uL23 family.</text>
</comment>
<dbReference type="EMBL" id="BA000040">
    <property type="protein sequence ID" value="BAC50663.1"/>
    <property type="molecule type" value="Genomic_DNA"/>
</dbReference>
<dbReference type="RefSeq" id="NP_772038.1">
    <property type="nucleotide sequence ID" value="NC_004463.1"/>
</dbReference>
<dbReference type="RefSeq" id="WP_011088149.1">
    <property type="nucleotide sequence ID" value="NZ_CP011360.1"/>
</dbReference>
<dbReference type="SMR" id="Q89J86"/>
<dbReference type="FunCoup" id="Q89J86">
    <property type="interactions" value="676"/>
</dbReference>
<dbReference type="STRING" id="224911.AAV28_24400"/>
<dbReference type="EnsemblBacteria" id="BAC50663">
    <property type="protein sequence ID" value="BAC50663"/>
    <property type="gene ID" value="BAC50663"/>
</dbReference>
<dbReference type="KEGG" id="bja:bll5398"/>
<dbReference type="PATRIC" id="fig|224911.44.peg.5297"/>
<dbReference type="eggNOG" id="COG0089">
    <property type="taxonomic scope" value="Bacteria"/>
</dbReference>
<dbReference type="HOGENOM" id="CLU_037562_3_1_5"/>
<dbReference type="InParanoid" id="Q89J86"/>
<dbReference type="OrthoDB" id="9793353at2"/>
<dbReference type="PhylomeDB" id="Q89J86"/>
<dbReference type="Proteomes" id="UP000002526">
    <property type="component" value="Chromosome"/>
</dbReference>
<dbReference type="GO" id="GO:0022625">
    <property type="term" value="C:cytosolic large ribosomal subunit"/>
    <property type="evidence" value="ECO:0000318"/>
    <property type="project" value="GO_Central"/>
</dbReference>
<dbReference type="GO" id="GO:0019843">
    <property type="term" value="F:rRNA binding"/>
    <property type="evidence" value="ECO:0007669"/>
    <property type="project" value="UniProtKB-UniRule"/>
</dbReference>
<dbReference type="GO" id="GO:0003735">
    <property type="term" value="F:structural constituent of ribosome"/>
    <property type="evidence" value="ECO:0000318"/>
    <property type="project" value="GO_Central"/>
</dbReference>
<dbReference type="GO" id="GO:0006412">
    <property type="term" value="P:translation"/>
    <property type="evidence" value="ECO:0007669"/>
    <property type="project" value="UniProtKB-UniRule"/>
</dbReference>
<dbReference type="FunFam" id="3.30.70.330:FF:000001">
    <property type="entry name" value="50S ribosomal protein L23"/>
    <property type="match status" value="1"/>
</dbReference>
<dbReference type="Gene3D" id="3.30.70.330">
    <property type="match status" value="1"/>
</dbReference>
<dbReference type="HAMAP" id="MF_01369_B">
    <property type="entry name" value="Ribosomal_uL23_B"/>
    <property type="match status" value="1"/>
</dbReference>
<dbReference type="InterPro" id="IPR012677">
    <property type="entry name" value="Nucleotide-bd_a/b_plait_sf"/>
</dbReference>
<dbReference type="InterPro" id="IPR013025">
    <property type="entry name" value="Ribosomal_uL23-like"/>
</dbReference>
<dbReference type="InterPro" id="IPR012678">
    <property type="entry name" value="Ribosomal_uL23/eL15/eS24_sf"/>
</dbReference>
<dbReference type="InterPro" id="IPR001014">
    <property type="entry name" value="Ribosomal_uL23_CS"/>
</dbReference>
<dbReference type="NCBIfam" id="NF004359">
    <property type="entry name" value="PRK05738.1-3"/>
    <property type="match status" value="1"/>
</dbReference>
<dbReference type="NCBIfam" id="NF004360">
    <property type="entry name" value="PRK05738.1-5"/>
    <property type="match status" value="1"/>
</dbReference>
<dbReference type="NCBIfam" id="NF004363">
    <property type="entry name" value="PRK05738.2-4"/>
    <property type="match status" value="1"/>
</dbReference>
<dbReference type="PANTHER" id="PTHR11620">
    <property type="entry name" value="60S RIBOSOMAL PROTEIN L23A"/>
    <property type="match status" value="1"/>
</dbReference>
<dbReference type="Pfam" id="PF00276">
    <property type="entry name" value="Ribosomal_L23"/>
    <property type="match status" value="1"/>
</dbReference>
<dbReference type="SUPFAM" id="SSF54189">
    <property type="entry name" value="Ribosomal proteins S24e, L23 and L15e"/>
    <property type="match status" value="1"/>
</dbReference>
<dbReference type="PROSITE" id="PS00050">
    <property type="entry name" value="RIBOSOMAL_L23"/>
    <property type="match status" value="1"/>
</dbReference>
<evidence type="ECO:0000255" key="1">
    <source>
        <dbReference type="HAMAP-Rule" id="MF_01369"/>
    </source>
</evidence>
<evidence type="ECO:0000305" key="2"/>
<sequence>MTKNIEPRHYDVIVAPVVTEKATLASEHNKVLFKVAAKATKPQIKEAIEKLFDVKVKSVNTLVRKGKTKVFRGNLGSQSNTKRAIVTLEEGHRIDVTTGL</sequence>
<keyword id="KW-1185">Reference proteome</keyword>
<keyword id="KW-0687">Ribonucleoprotein</keyword>
<keyword id="KW-0689">Ribosomal protein</keyword>
<keyword id="KW-0694">RNA-binding</keyword>
<keyword id="KW-0699">rRNA-binding</keyword>
<feature type="chain" id="PRO_0000272714" description="Large ribosomal subunit protein uL23">
    <location>
        <begin position="1"/>
        <end position="100"/>
    </location>
</feature>
<protein>
    <recommendedName>
        <fullName evidence="1">Large ribosomal subunit protein uL23</fullName>
    </recommendedName>
    <alternativeName>
        <fullName evidence="2">50S ribosomal protein L23</fullName>
    </alternativeName>
</protein>